<dbReference type="EMBL" id="M13538">
    <property type="protein sequence ID" value="AAA39632.1"/>
    <property type="molecule type" value="mRNA"/>
</dbReference>
<dbReference type="EMBL" id="M27456">
    <property type="protein sequence ID" value="AAA57291.1"/>
    <property type="molecule type" value="Genomic_DNA"/>
</dbReference>
<dbReference type="PIR" id="A02238">
    <property type="entry name" value="HLMSBK"/>
</dbReference>
<dbReference type="PIR" id="I68208">
    <property type="entry name" value="I68208"/>
</dbReference>
<dbReference type="PIR" id="PL0285">
    <property type="entry name" value="PL0285"/>
</dbReference>
<dbReference type="PIR" id="PL0286">
    <property type="entry name" value="PL0286"/>
</dbReference>
<dbReference type="PDB" id="1D9K">
    <property type="method" value="X-ray"/>
    <property type="resolution" value="3.20 A"/>
    <property type="chains" value="D/H=30-216"/>
</dbReference>
<dbReference type="PDB" id="1IAK">
    <property type="method" value="X-ray"/>
    <property type="resolution" value="1.90 A"/>
    <property type="chains" value="B=34-216"/>
</dbReference>
<dbReference type="PDB" id="1JL4">
    <property type="method" value="X-ray"/>
    <property type="resolution" value="4.30 A"/>
    <property type="chains" value="B=34-216"/>
</dbReference>
<dbReference type="PDBsum" id="1D9K"/>
<dbReference type="PDBsum" id="1IAK"/>
<dbReference type="PDBsum" id="1JL4"/>
<dbReference type="SMR" id="P06343"/>
<dbReference type="DIP" id="DIP-6134N"/>
<dbReference type="IntAct" id="P06343">
    <property type="interactions" value="1"/>
</dbReference>
<dbReference type="MINT" id="P06343"/>
<dbReference type="GlyCosmos" id="P06343">
    <property type="glycosylation" value="1 site, No reported glycans"/>
</dbReference>
<dbReference type="iPTMnet" id="P06343"/>
<dbReference type="jPOST" id="P06343"/>
<dbReference type="ProteomicsDB" id="270893"/>
<dbReference type="AGR" id="MGI:103070"/>
<dbReference type="MGI" id="MGI:103070">
    <property type="gene designation" value="H2-Ab1"/>
</dbReference>
<dbReference type="OrthoDB" id="10043043at2759"/>
<dbReference type="ChiTaRS" id="H2-Ab1">
    <property type="organism name" value="mouse"/>
</dbReference>
<dbReference type="EvolutionaryTrace" id="P06343"/>
<dbReference type="Proteomes" id="UP000000589">
    <property type="component" value="Unplaced"/>
</dbReference>
<dbReference type="GO" id="GO:0005769">
    <property type="term" value="C:early endosome"/>
    <property type="evidence" value="ECO:0000314"/>
    <property type="project" value="MGI"/>
</dbReference>
<dbReference type="GO" id="GO:0009897">
    <property type="term" value="C:external side of plasma membrane"/>
    <property type="evidence" value="ECO:0000314"/>
    <property type="project" value="MGI"/>
</dbReference>
<dbReference type="GO" id="GO:0005794">
    <property type="term" value="C:Golgi apparatus"/>
    <property type="evidence" value="ECO:0000314"/>
    <property type="project" value="MGI"/>
</dbReference>
<dbReference type="GO" id="GO:0016020">
    <property type="term" value="C:membrane"/>
    <property type="evidence" value="ECO:0000314"/>
    <property type="project" value="MGI"/>
</dbReference>
<dbReference type="GO" id="GO:0042613">
    <property type="term" value="C:MHC class II protein complex"/>
    <property type="evidence" value="ECO:0000314"/>
    <property type="project" value="MGI"/>
</dbReference>
<dbReference type="GO" id="GO:0005771">
    <property type="term" value="C:multivesicular body"/>
    <property type="evidence" value="ECO:0000314"/>
    <property type="project" value="MGI"/>
</dbReference>
<dbReference type="GO" id="GO:0005886">
    <property type="term" value="C:plasma membrane"/>
    <property type="evidence" value="ECO:0000314"/>
    <property type="project" value="MGI"/>
</dbReference>
<dbReference type="GO" id="GO:0042605">
    <property type="term" value="F:peptide antigen binding"/>
    <property type="evidence" value="ECO:0000314"/>
    <property type="project" value="MGI"/>
</dbReference>
<dbReference type="GO" id="GO:0002250">
    <property type="term" value="P:adaptive immune response"/>
    <property type="evidence" value="ECO:0007669"/>
    <property type="project" value="UniProtKB-KW"/>
</dbReference>
<dbReference type="GO" id="GO:0019882">
    <property type="term" value="P:antigen processing and presentation"/>
    <property type="evidence" value="ECO:0000314"/>
    <property type="project" value="MGI"/>
</dbReference>
<dbReference type="GO" id="GO:0019886">
    <property type="term" value="P:antigen processing and presentation of exogenous peptide antigen via MHC class II"/>
    <property type="evidence" value="ECO:0000314"/>
    <property type="project" value="MGI"/>
</dbReference>
<dbReference type="GO" id="GO:0048002">
    <property type="term" value="P:antigen processing and presentation of peptide antigen"/>
    <property type="evidence" value="ECO:0000314"/>
    <property type="project" value="MGI"/>
</dbReference>
<dbReference type="GO" id="GO:0006955">
    <property type="term" value="P:immune response"/>
    <property type="evidence" value="ECO:0000315"/>
    <property type="project" value="MGI"/>
</dbReference>
<dbReference type="CDD" id="cd21001">
    <property type="entry name" value="IgC1_MHC_II_beta_HLA-DQ_I-A"/>
    <property type="match status" value="1"/>
</dbReference>
<dbReference type="FunFam" id="2.60.40.10:FF:000116">
    <property type="entry name" value="HLA class II histocompatibility antigen, DRB1-1 beta chain"/>
    <property type="match status" value="1"/>
</dbReference>
<dbReference type="FunFam" id="3.10.320.10:FF:000001">
    <property type="entry name" value="HLA class II histocompatibility antigen, DRB1-1 beta chain"/>
    <property type="match status" value="1"/>
</dbReference>
<dbReference type="Gene3D" id="3.10.320.10">
    <property type="entry name" value="Class II Histocompatibility Antigen, M Beta Chain, Chain B, domain 1"/>
    <property type="match status" value="1"/>
</dbReference>
<dbReference type="Gene3D" id="2.60.40.10">
    <property type="entry name" value="Immunoglobulins"/>
    <property type="match status" value="1"/>
</dbReference>
<dbReference type="InterPro" id="IPR007110">
    <property type="entry name" value="Ig-like_dom"/>
</dbReference>
<dbReference type="InterPro" id="IPR036179">
    <property type="entry name" value="Ig-like_dom_sf"/>
</dbReference>
<dbReference type="InterPro" id="IPR013783">
    <property type="entry name" value="Ig-like_fold"/>
</dbReference>
<dbReference type="InterPro" id="IPR003006">
    <property type="entry name" value="Ig/MHC_CS"/>
</dbReference>
<dbReference type="InterPro" id="IPR003597">
    <property type="entry name" value="Ig_C1-set"/>
</dbReference>
<dbReference type="InterPro" id="IPR050160">
    <property type="entry name" value="MHC/Immunoglobulin"/>
</dbReference>
<dbReference type="InterPro" id="IPR011162">
    <property type="entry name" value="MHC_I/II-like_Ag-recog"/>
</dbReference>
<dbReference type="InterPro" id="IPR014745">
    <property type="entry name" value="MHC_II_a/b_N"/>
</dbReference>
<dbReference type="InterPro" id="IPR000353">
    <property type="entry name" value="MHC_II_b_N"/>
</dbReference>
<dbReference type="PANTHER" id="PTHR19944:SF101">
    <property type="entry name" value="HLA CLASS II HISTOCOMPATIBILITY ANTIGEN, DQ BETA 1 CHAIN"/>
    <property type="match status" value="1"/>
</dbReference>
<dbReference type="PANTHER" id="PTHR19944">
    <property type="entry name" value="MHC CLASS II-RELATED"/>
    <property type="match status" value="1"/>
</dbReference>
<dbReference type="Pfam" id="PF07654">
    <property type="entry name" value="C1-set"/>
    <property type="match status" value="1"/>
</dbReference>
<dbReference type="Pfam" id="PF00969">
    <property type="entry name" value="MHC_II_beta"/>
    <property type="match status" value="1"/>
</dbReference>
<dbReference type="SMART" id="SM00407">
    <property type="entry name" value="IGc1"/>
    <property type="match status" value="1"/>
</dbReference>
<dbReference type="SMART" id="SM00921">
    <property type="entry name" value="MHC_II_beta"/>
    <property type="match status" value="1"/>
</dbReference>
<dbReference type="SUPFAM" id="SSF48726">
    <property type="entry name" value="Immunoglobulin"/>
    <property type="match status" value="1"/>
</dbReference>
<dbReference type="SUPFAM" id="SSF54452">
    <property type="entry name" value="MHC antigen-recognition domain"/>
    <property type="match status" value="1"/>
</dbReference>
<dbReference type="PROSITE" id="PS50835">
    <property type="entry name" value="IG_LIKE"/>
    <property type="match status" value="1"/>
</dbReference>
<dbReference type="PROSITE" id="PS00290">
    <property type="entry name" value="IG_MHC"/>
    <property type="match status" value="1"/>
</dbReference>
<comment type="subcellular location">
    <subcellularLocation>
        <location evidence="5">Membrane</location>
        <topology evidence="5">Single-pass type I membrane protein</topology>
    </subcellularLocation>
</comment>
<comment type="PTM">
    <text evidence="2 3">Ubiquitinated in immature dendritic cells leading to down-regulation of MHC class II.</text>
</comment>
<comment type="similarity">
    <text evidence="5">Belongs to the MHC class II family.</text>
</comment>
<protein>
    <recommendedName>
        <fullName>H-2 class II histocompatibility antigen, A-K beta chain</fullName>
    </recommendedName>
</protein>
<name>HB2K_MOUSE</name>
<keyword id="KW-0002">3D-structure</keyword>
<keyword id="KW-1064">Adaptive immunity</keyword>
<keyword id="KW-1015">Disulfide bond</keyword>
<keyword id="KW-0325">Glycoprotein</keyword>
<keyword id="KW-0391">Immunity</keyword>
<keyword id="KW-0472">Membrane</keyword>
<keyword id="KW-0491">MHC II</keyword>
<keyword id="KW-1185">Reference proteome</keyword>
<keyword id="KW-0732">Signal</keyword>
<keyword id="KW-0812">Transmembrane</keyword>
<keyword id="KW-1133">Transmembrane helix</keyword>
<keyword id="KW-0832">Ubl conjugation</keyword>
<gene>
    <name type="primary">H2-Ab1</name>
</gene>
<reference key="1">
    <citation type="journal article" date="1986" name="Proc. Natl. Acad. Sci. U.S.A.">
        <title>Sequence analysis and structure-function correlations of murine q, k, u, s, and f haplotype I-A beta cDNA clones.</title>
        <authorList>
            <person name="Estess P."/>
            <person name="Begovich A.B."/>
            <person name="Koo M."/>
            <person name="Jones P.P."/>
            <person name="McDevitt H.O."/>
        </authorList>
    </citation>
    <scope>NUCLEOTIDE SEQUENCE [MRNA]</scope>
</reference>
<reference key="2">
    <citation type="journal article" date="1987" name="Genet. Res.">
        <title>Nucleotide sequence analysis of class II genes borne by mouse t chromosomes.</title>
        <authorList>
            <person name="Golubic M."/>
            <person name="Budimir O."/>
            <person name="Schoepfer R."/>
            <person name="Kasahara M."/>
            <person name="Mayer W.E."/>
            <person name="Figueroa F."/>
            <person name="Klein J."/>
        </authorList>
    </citation>
    <scope>NUCLEOTIDE SEQUENCE [GENOMIC DNA] OF 33-214</scope>
    <source>
        <strain>CRO435</strain>
    </source>
</reference>
<reference key="3">
    <citation type="journal article" date="1985" name="J. Biol. Chem.">
        <title>Oligosaccharide microheterogeneity of the murine major histocompatibility antigens. Reproducible site-specific patterns of sialylation and branching in asparagine-linked oligosaccharides.</title>
        <authorList>
            <person name="Swiedler S.J."/>
            <person name="Freed J.H."/>
            <person name="Tarentino A.L."/>
            <person name="Plummer T.H. Jr."/>
            <person name="Hart G.W."/>
        </authorList>
    </citation>
    <scope>GLYCOSYLATION AT ASN-46</scope>
</reference>
<reference key="4">
    <citation type="journal article" date="2006" name="Immunity">
        <title>Dendritic cells regulate exposure of MHC class II at their plasma membrane by oligoubiquitination.</title>
        <authorList>
            <person name="van Niel G."/>
            <person name="Wubbolts R."/>
            <person name="Ten Broeke T."/>
            <person name="Buschow S.I."/>
            <person name="Ossendorp F.A."/>
            <person name="Melief C.J."/>
            <person name="Raposo G."/>
            <person name="van Balkom B.W."/>
            <person name="Stoorvogel W."/>
        </authorList>
    </citation>
    <scope>UBIQUITINATION</scope>
</reference>
<reference key="5">
    <citation type="journal article" date="2006" name="Nature">
        <title>Surface expression of MHC class II in dendritic cells is controlled by regulated ubiquitination.</title>
        <authorList>
            <person name="Shin J.S."/>
            <person name="Ebersold M."/>
            <person name="Pypaert M."/>
            <person name="Delamarre L."/>
            <person name="Hartley A."/>
            <person name="Mellman I."/>
        </authorList>
    </citation>
    <scope>UBIQUITINATION</scope>
</reference>
<reference key="6">
    <citation type="journal article" date="1998" name="Immunity">
        <title>Crystal structure of I-Ak in complex with a dominant epitope of lysozyme.</title>
        <authorList>
            <person name="Fremont D.H."/>
            <person name="Monnaie D."/>
            <person name="Nelson C.A."/>
            <person name="Hendrickson W.A."/>
            <person name="Unanue E.R."/>
        </authorList>
    </citation>
    <scope>X-RAY CRYSTALLOGRAPHY (1.9 ANGSTROMS) OF 32-216</scope>
</reference>
<organism>
    <name type="scientific">Mus musculus</name>
    <name type="common">Mouse</name>
    <dbReference type="NCBI Taxonomy" id="10090"/>
    <lineage>
        <taxon>Eukaryota</taxon>
        <taxon>Metazoa</taxon>
        <taxon>Chordata</taxon>
        <taxon>Craniata</taxon>
        <taxon>Vertebrata</taxon>
        <taxon>Euteleostomi</taxon>
        <taxon>Mammalia</taxon>
        <taxon>Eutheria</taxon>
        <taxon>Euarchontoglires</taxon>
        <taxon>Glires</taxon>
        <taxon>Rodentia</taxon>
        <taxon>Myomorpha</taxon>
        <taxon>Muroidea</taxon>
        <taxon>Muridae</taxon>
        <taxon>Murinae</taxon>
        <taxon>Mus</taxon>
        <taxon>Mus</taxon>
    </lineage>
</organism>
<feature type="signal peptide">
    <location>
        <begin position="1"/>
        <end position="27"/>
    </location>
</feature>
<feature type="chain" id="PRO_0000018996" description="H-2 class II histocompatibility antigen, A-K beta chain">
    <location>
        <begin position="28"/>
        <end position="263"/>
    </location>
</feature>
<feature type="topological domain" description="Extracellular" evidence="1">
    <location>
        <begin position="28"/>
        <end position="224"/>
    </location>
</feature>
<feature type="transmembrane region" description="Helical" evidence="1">
    <location>
        <begin position="225"/>
        <end position="245"/>
    </location>
</feature>
<feature type="topological domain" description="Cytoplasmic" evidence="1">
    <location>
        <begin position="246"/>
        <end position="263"/>
    </location>
</feature>
<feature type="domain" description="Ig-like C1-type">
    <location>
        <begin position="123"/>
        <end position="211"/>
    </location>
</feature>
<feature type="region of interest" description="Beta-1">
    <location>
        <begin position="28"/>
        <end position="120"/>
    </location>
</feature>
<feature type="region of interest" description="Beta-2">
    <location>
        <begin position="121"/>
        <end position="214"/>
    </location>
</feature>
<feature type="region of interest" description="Connecting peptide">
    <location>
        <begin position="215"/>
        <end position="224"/>
    </location>
</feature>
<feature type="glycosylation site" description="N-linked (GlcNAc...) asparagine" evidence="4">
    <location>
        <position position="46"/>
    </location>
</feature>
<feature type="disulfide bond">
    <location>
        <begin position="42"/>
        <end position="104"/>
    </location>
</feature>
<feature type="disulfide bond">
    <location>
        <begin position="143"/>
        <end position="199"/>
    </location>
</feature>
<feature type="sequence conflict" description="In Ref. 2; AAA57291." evidence="5" ref="2">
    <original>H</original>
    <variation>Y</variation>
    <location>
        <position position="36"/>
    </location>
</feature>
<feature type="sequence conflict" description="In Ref. 2; AAA57291." evidence="5" ref="2">
    <original>I</original>
    <variation>T</variation>
    <location>
        <position position="55"/>
    </location>
</feature>
<feature type="sequence conflict" description="In Ref. 2; AAA57291." evidence="5" ref="2">
    <original>YV</original>
    <variation>FM</variation>
    <location>
        <begin position="64"/>
        <end position="65"/>
    </location>
</feature>
<feature type="sequence conflict" description="In Ref. 2; AAA57291." evidence="5" ref="2">
    <original>A</original>
    <variation>V</variation>
    <location>
        <position position="85"/>
    </location>
</feature>
<feature type="sequence conflict" description="In Ref. 2; AAA57291." evidence="5" ref="2">
    <original>K</original>
    <variation>S</variation>
    <location>
        <position position="90"/>
    </location>
</feature>
<feature type="sequence conflict" description="In Ref. 2; AAA57291." evidence="5" ref="2">
    <original>P</original>
    <variation>H</variation>
    <location>
        <position position="114"/>
    </location>
</feature>
<feature type="sequence conflict" description="In Ref. 2; AAA57291." evidence="5" ref="2">
    <original>L</original>
    <variation>F</variation>
    <location>
        <position position="120"/>
    </location>
</feature>
<feature type="sequence conflict" description="In Ref. 2; AAA57291." evidence="5" ref="2">
    <original>S</original>
    <variation>N</variation>
    <location>
        <position position="124"/>
    </location>
</feature>
<feature type="strand" evidence="7">
    <location>
        <begin position="34"/>
        <end position="45"/>
    </location>
</feature>
<feature type="helix" evidence="7">
    <location>
        <begin position="47"/>
        <end position="49"/>
    </location>
</feature>
<feature type="strand" evidence="7">
    <location>
        <begin position="50"/>
        <end position="59"/>
    </location>
</feature>
<feature type="strand" evidence="7">
    <location>
        <begin position="62"/>
        <end position="68"/>
    </location>
</feature>
<feature type="turn" evidence="7">
    <location>
        <begin position="69"/>
        <end position="71"/>
    </location>
</feature>
<feature type="strand" evidence="7">
    <location>
        <begin position="73"/>
        <end position="78"/>
    </location>
</feature>
<feature type="helix" evidence="7">
    <location>
        <begin position="79"/>
        <end position="81"/>
    </location>
</feature>
<feature type="helix" evidence="7">
    <location>
        <begin position="82"/>
        <end position="91"/>
    </location>
</feature>
<feature type="helix" evidence="7">
    <location>
        <begin position="93"/>
        <end position="97"/>
    </location>
</feature>
<feature type="helix" evidence="7">
    <location>
        <begin position="99"/>
        <end position="102"/>
    </location>
</feature>
<feature type="helix" evidence="7">
    <location>
        <begin position="104"/>
        <end position="110"/>
    </location>
</feature>
<feature type="turn" evidence="7">
    <location>
        <begin position="111"/>
        <end position="115"/>
    </location>
</feature>
<feature type="helix" evidence="7">
    <location>
        <begin position="116"/>
        <end position="118"/>
    </location>
</feature>
<feature type="strand" evidence="7">
    <location>
        <begin position="124"/>
        <end position="131"/>
    </location>
</feature>
<feature type="strand" evidence="6">
    <location>
        <begin position="135"/>
        <end position="137"/>
    </location>
</feature>
<feature type="strand" evidence="7">
    <location>
        <begin position="139"/>
        <end position="151"/>
    </location>
</feature>
<feature type="strand" evidence="7">
    <location>
        <begin position="154"/>
        <end position="159"/>
    </location>
</feature>
<feature type="strand" evidence="7">
    <location>
        <begin position="162"/>
        <end position="164"/>
    </location>
</feature>
<feature type="strand" evidence="7">
    <location>
        <begin position="168"/>
        <end position="170"/>
    </location>
</feature>
<feature type="strand" evidence="7">
    <location>
        <begin position="177"/>
        <end position="179"/>
    </location>
</feature>
<feature type="strand" evidence="7">
    <location>
        <begin position="181"/>
        <end position="189"/>
    </location>
</feature>
<feature type="strand" evidence="7">
    <location>
        <begin position="196"/>
        <end position="202"/>
    </location>
</feature>
<feature type="strand" evidence="7">
    <location>
        <begin position="210"/>
        <end position="215"/>
    </location>
</feature>
<proteinExistence type="evidence at protein level"/>
<sequence>MALQIPSLLLLAAVVVLTVLSSPGTEGGNSERHFVHQFQPFCYFTNGTQRIRLVIRYIYNREEYVRFDSDVGEYRAVTELGRPDAEYWNKQYLERTRAELDTVCRHNYEKTETPTSLRRLEQPSVVISLSRTEALNHHNTLVCSVTDFYPAKIKVRWFRNGQEETVGVSSTQLIRNGDWTFQVLVMLEMTPRRGEVYTCHVEHPSLKSPITVEWRAQSESARSKMLSGIGGCVLGVIFLGLGLFIRHRSQKGPRGPPPAGLLQ</sequence>
<evidence type="ECO:0000255" key="1"/>
<evidence type="ECO:0000269" key="2">
    <source>
    </source>
</evidence>
<evidence type="ECO:0000269" key="3">
    <source>
    </source>
</evidence>
<evidence type="ECO:0000269" key="4">
    <source>
    </source>
</evidence>
<evidence type="ECO:0000305" key="5"/>
<evidence type="ECO:0007829" key="6">
    <source>
        <dbReference type="PDB" id="1D9K"/>
    </source>
</evidence>
<evidence type="ECO:0007829" key="7">
    <source>
        <dbReference type="PDB" id="1IAK"/>
    </source>
</evidence>
<accession>P06343</accession>
<accession>Q31137</accession>